<gene>
    <name evidence="1" type="primary">truA</name>
    <name type="ordered locus">CC_0278</name>
</gene>
<proteinExistence type="inferred from homology"/>
<keyword id="KW-0413">Isomerase</keyword>
<keyword id="KW-1185">Reference proteome</keyword>
<keyword id="KW-0819">tRNA processing</keyword>
<comment type="function">
    <text evidence="1">Formation of pseudouridine at positions 38, 39 and 40 in the anticodon stem and loop of transfer RNAs.</text>
</comment>
<comment type="catalytic activity">
    <reaction evidence="1">
        <text>uridine(38/39/40) in tRNA = pseudouridine(38/39/40) in tRNA</text>
        <dbReference type="Rhea" id="RHEA:22376"/>
        <dbReference type="Rhea" id="RHEA-COMP:10085"/>
        <dbReference type="Rhea" id="RHEA-COMP:10087"/>
        <dbReference type="ChEBI" id="CHEBI:65314"/>
        <dbReference type="ChEBI" id="CHEBI:65315"/>
        <dbReference type="EC" id="5.4.99.12"/>
    </reaction>
</comment>
<comment type="subunit">
    <text evidence="1">Homodimer.</text>
</comment>
<comment type="similarity">
    <text evidence="1">Belongs to the tRNA pseudouridine synthase TruA family.</text>
</comment>
<evidence type="ECO:0000255" key="1">
    <source>
        <dbReference type="HAMAP-Rule" id="MF_00171"/>
    </source>
</evidence>
<protein>
    <recommendedName>
        <fullName evidence="1">tRNA pseudouridine synthase A</fullName>
        <ecNumber evidence="1">5.4.99.12</ecNumber>
    </recommendedName>
    <alternativeName>
        <fullName evidence="1">tRNA pseudouridine(38-40) synthase</fullName>
    </alternativeName>
    <alternativeName>
        <fullName evidence="1">tRNA pseudouridylate synthase I</fullName>
    </alternativeName>
    <alternativeName>
        <fullName evidence="1">tRNA-uridine isomerase I</fullName>
    </alternativeName>
</protein>
<sequence length="247" mass="27505">MPRYRLLVEYDGRPYAGFQAQATLPSVQGAIEAAVKAFCGQEVRIAAAGRTDTGVHATGQVVHVDLDKDWPAQTVFNALNAHLTREAVSILSAEVAEEGWHARFSANERRYLYRILNRRAPPALDKGRVWHMKKDLDHEAMHAAAQHLIGLHDFTTFRDMHCQSKSPVKTLDVARVRRVGEEIHLDFEARSFLHRQVRSMTGTLVEVGAGRWTVDDVKAALEARDRRECGPVAPADGLYLVGVGYGD</sequence>
<feature type="chain" id="PRO_0000057357" description="tRNA pseudouridine synthase A">
    <location>
        <begin position="1"/>
        <end position="247"/>
    </location>
</feature>
<feature type="active site" description="Nucleophile" evidence="1">
    <location>
        <position position="52"/>
    </location>
</feature>
<feature type="binding site" evidence="1">
    <location>
        <position position="111"/>
    </location>
    <ligand>
        <name>substrate</name>
    </ligand>
</feature>
<name>TRUA_CAUVC</name>
<accession>Q9ABF0</accession>
<dbReference type="EC" id="5.4.99.12" evidence="1"/>
<dbReference type="EMBL" id="AE005673">
    <property type="protein sequence ID" value="AAK22265.1"/>
    <property type="molecule type" value="Genomic_DNA"/>
</dbReference>
<dbReference type="PIR" id="E87283">
    <property type="entry name" value="E87283"/>
</dbReference>
<dbReference type="RefSeq" id="NP_419097.1">
    <property type="nucleotide sequence ID" value="NC_002696.2"/>
</dbReference>
<dbReference type="RefSeq" id="WP_010918167.1">
    <property type="nucleotide sequence ID" value="NC_002696.2"/>
</dbReference>
<dbReference type="SMR" id="Q9ABF0"/>
<dbReference type="STRING" id="190650.CC_0278"/>
<dbReference type="EnsemblBacteria" id="AAK22265">
    <property type="protein sequence ID" value="AAK22265"/>
    <property type="gene ID" value="CC_0278"/>
</dbReference>
<dbReference type="KEGG" id="ccr:CC_0278"/>
<dbReference type="PATRIC" id="fig|190650.5.peg.276"/>
<dbReference type="eggNOG" id="COG0101">
    <property type="taxonomic scope" value="Bacteria"/>
</dbReference>
<dbReference type="HOGENOM" id="CLU_014673_0_2_5"/>
<dbReference type="BioCyc" id="CAULO:CC0278-MONOMER"/>
<dbReference type="Proteomes" id="UP000001816">
    <property type="component" value="Chromosome"/>
</dbReference>
<dbReference type="GO" id="GO:0003723">
    <property type="term" value="F:RNA binding"/>
    <property type="evidence" value="ECO:0007669"/>
    <property type="project" value="InterPro"/>
</dbReference>
<dbReference type="GO" id="GO:0160147">
    <property type="term" value="F:tRNA pseudouridine(38-40) synthase activity"/>
    <property type="evidence" value="ECO:0007669"/>
    <property type="project" value="UniProtKB-EC"/>
</dbReference>
<dbReference type="GO" id="GO:0031119">
    <property type="term" value="P:tRNA pseudouridine synthesis"/>
    <property type="evidence" value="ECO:0007669"/>
    <property type="project" value="UniProtKB-UniRule"/>
</dbReference>
<dbReference type="CDD" id="cd02570">
    <property type="entry name" value="PseudoU_synth_EcTruA"/>
    <property type="match status" value="1"/>
</dbReference>
<dbReference type="FunFam" id="3.30.70.580:FF:000001">
    <property type="entry name" value="tRNA pseudouridine synthase A"/>
    <property type="match status" value="1"/>
</dbReference>
<dbReference type="Gene3D" id="3.30.70.660">
    <property type="entry name" value="Pseudouridine synthase I, catalytic domain, C-terminal subdomain"/>
    <property type="match status" value="1"/>
</dbReference>
<dbReference type="Gene3D" id="3.30.70.580">
    <property type="entry name" value="Pseudouridine synthase I, catalytic domain, N-terminal subdomain"/>
    <property type="match status" value="1"/>
</dbReference>
<dbReference type="HAMAP" id="MF_00171">
    <property type="entry name" value="TruA"/>
    <property type="match status" value="1"/>
</dbReference>
<dbReference type="InterPro" id="IPR020103">
    <property type="entry name" value="PsdUridine_synth_cat_dom_sf"/>
</dbReference>
<dbReference type="InterPro" id="IPR001406">
    <property type="entry name" value="PsdUridine_synth_TruA"/>
</dbReference>
<dbReference type="InterPro" id="IPR020097">
    <property type="entry name" value="PsdUridine_synth_TruA_a/b_dom"/>
</dbReference>
<dbReference type="InterPro" id="IPR020095">
    <property type="entry name" value="PsdUridine_synth_TruA_C"/>
</dbReference>
<dbReference type="InterPro" id="IPR020094">
    <property type="entry name" value="TruA/RsuA/RluB/E/F_N"/>
</dbReference>
<dbReference type="NCBIfam" id="TIGR00071">
    <property type="entry name" value="hisT_truA"/>
    <property type="match status" value="1"/>
</dbReference>
<dbReference type="PANTHER" id="PTHR11142">
    <property type="entry name" value="PSEUDOURIDYLATE SYNTHASE"/>
    <property type="match status" value="1"/>
</dbReference>
<dbReference type="PANTHER" id="PTHR11142:SF0">
    <property type="entry name" value="TRNA PSEUDOURIDINE SYNTHASE-LIKE 1"/>
    <property type="match status" value="1"/>
</dbReference>
<dbReference type="Pfam" id="PF01416">
    <property type="entry name" value="PseudoU_synth_1"/>
    <property type="match status" value="2"/>
</dbReference>
<dbReference type="PIRSF" id="PIRSF001430">
    <property type="entry name" value="tRNA_psdUrid_synth"/>
    <property type="match status" value="1"/>
</dbReference>
<dbReference type="SUPFAM" id="SSF55120">
    <property type="entry name" value="Pseudouridine synthase"/>
    <property type="match status" value="1"/>
</dbReference>
<reference key="1">
    <citation type="journal article" date="2001" name="Proc. Natl. Acad. Sci. U.S.A.">
        <title>Complete genome sequence of Caulobacter crescentus.</title>
        <authorList>
            <person name="Nierman W.C."/>
            <person name="Feldblyum T.V."/>
            <person name="Laub M.T."/>
            <person name="Paulsen I.T."/>
            <person name="Nelson K.E."/>
            <person name="Eisen J.A."/>
            <person name="Heidelberg J.F."/>
            <person name="Alley M.R.K."/>
            <person name="Ohta N."/>
            <person name="Maddock J.R."/>
            <person name="Potocka I."/>
            <person name="Nelson W.C."/>
            <person name="Newton A."/>
            <person name="Stephens C."/>
            <person name="Phadke N.D."/>
            <person name="Ely B."/>
            <person name="DeBoy R.T."/>
            <person name="Dodson R.J."/>
            <person name="Durkin A.S."/>
            <person name="Gwinn M.L."/>
            <person name="Haft D.H."/>
            <person name="Kolonay J.F."/>
            <person name="Smit J."/>
            <person name="Craven M.B."/>
            <person name="Khouri H.M."/>
            <person name="Shetty J."/>
            <person name="Berry K.J."/>
            <person name="Utterback T.R."/>
            <person name="Tran K."/>
            <person name="Wolf A.M."/>
            <person name="Vamathevan J.J."/>
            <person name="Ermolaeva M.D."/>
            <person name="White O."/>
            <person name="Salzberg S.L."/>
            <person name="Venter J.C."/>
            <person name="Shapiro L."/>
            <person name="Fraser C.M."/>
        </authorList>
    </citation>
    <scope>NUCLEOTIDE SEQUENCE [LARGE SCALE GENOMIC DNA]</scope>
    <source>
        <strain>ATCC 19089 / CIP 103742 / CB 15</strain>
    </source>
</reference>
<organism>
    <name type="scientific">Caulobacter vibrioides (strain ATCC 19089 / CIP 103742 / CB 15)</name>
    <name type="common">Caulobacter crescentus</name>
    <dbReference type="NCBI Taxonomy" id="190650"/>
    <lineage>
        <taxon>Bacteria</taxon>
        <taxon>Pseudomonadati</taxon>
        <taxon>Pseudomonadota</taxon>
        <taxon>Alphaproteobacteria</taxon>
        <taxon>Caulobacterales</taxon>
        <taxon>Caulobacteraceae</taxon>
        <taxon>Caulobacter</taxon>
    </lineage>
</organism>